<gene>
    <name evidence="4 6" type="primary">MAIP1</name>
    <name type="synonym">C2orf47</name>
</gene>
<feature type="transit peptide" description="Mitochondrion" evidence="1">
    <location>
        <begin position="1"/>
        <end position="96"/>
    </location>
</feature>
<feature type="chain" id="PRO_0000301945" description="m-AAA protease-interacting protein 1, mitochondrial">
    <location>
        <begin position="97"/>
        <end position="291"/>
    </location>
</feature>
<feature type="sequence variant" id="VAR_034911" description="In dbSNP:rs2118548.">
    <original>L</original>
    <variation>I</variation>
    <location>
        <position position="290"/>
    </location>
</feature>
<feature type="sequence conflict" description="In Ref. 1; BAB15393." evidence="5" ref="1">
    <original>D</original>
    <variation>G</variation>
    <location>
        <position position="208"/>
    </location>
</feature>
<comment type="function">
    <text evidence="3">Promotes sorting of SMDT1/EMRE in mitochondria by ensuring its maturation (PubMed:27642048). Interacts with the transit peptide region of SMDT1/EMRE precursor protein in the mitochondrial matrix, leading to protect it against protein degradation by YME1L1, thereby ensuring SMDT1/EMRE maturation by the mitochondrial processing peptidase (PMPCA and PMPCB) (PubMed:27642048).</text>
</comment>
<comment type="subunit">
    <text evidence="2 3">Interacts with AFG3L2 (PubMed:27499296, PubMed:27642048). Interacts with SPG7 (PubMed:27499296). Interacts with SMDT1/EMRE (via the N-terminal transit peptide); interaction is direct and takes place before maturation of SMDT1/EMRE (PubMed:27642048).</text>
</comment>
<comment type="interaction">
    <interactant intactId="EBI-1042937">
        <id>Q8WWC4</id>
    </interactant>
    <interactant intactId="EBI-1220105">
        <id>P02654</id>
        <label>APOC1</label>
    </interactant>
    <organismsDiffer>false</organismsDiffer>
    <experiments>3</experiments>
</comment>
<comment type="interaction">
    <interactant intactId="EBI-1042937">
        <id>Q8WWC4</id>
    </interactant>
    <interactant intactId="EBI-18302142">
        <id>P55056</id>
        <label>APOC4</label>
    </interactant>
    <organismsDiffer>false</organismsDiffer>
    <experiments>3</experiments>
</comment>
<comment type="interaction">
    <interactant intactId="EBI-1042937">
        <id>Q8WWC4</id>
    </interactant>
    <interactant intactId="EBI-10294329">
        <id>Q99525</id>
        <label>H4C7</label>
    </interactant>
    <organismsDiffer>false</organismsDiffer>
    <experiments>3</experiments>
</comment>
<comment type="subcellular location">
    <subcellularLocation>
        <location evidence="3">Mitochondrion matrix</location>
    </subcellularLocation>
</comment>
<dbReference type="EMBL" id="AK026208">
    <property type="protein sequence ID" value="BAB15393.1"/>
    <property type="molecule type" value="mRNA"/>
</dbReference>
<dbReference type="EMBL" id="AC097717">
    <property type="protein sequence ID" value="AAY24163.1"/>
    <property type="molecule type" value="Genomic_DNA"/>
</dbReference>
<dbReference type="EMBL" id="CH471063">
    <property type="protein sequence ID" value="EAW70195.1"/>
    <property type="molecule type" value="Genomic_DNA"/>
</dbReference>
<dbReference type="EMBL" id="BC017959">
    <property type="protein sequence ID" value="AAH17959.1"/>
    <property type="molecule type" value="mRNA"/>
</dbReference>
<dbReference type="EMBL" id="AL832964">
    <property type="protein sequence ID" value="CAH56348.1"/>
    <property type="molecule type" value="mRNA"/>
</dbReference>
<dbReference type="CCDS" id="CCDS2329.1"/>
<dbReference type="RefSeq" id="NP_001381884.1">
    <property type="nucleotide sequence ID" value="NM_001394955.1"/>
</dbReference>
<dbReference type="RefSeq" id="NP_078796.2">
    <property type="nucleotide sequence ID" value="NM_024520.3"/>
</dbReference>
<dbReference type="BioGRID" id="122716">
    <property type="interactions" value="103"/>
</dbReference>
<dbReference type="FunCoup" id="Q8WWC4">
    <property type="interactions" value="765"/>
</dbReference>
<dbReference type="IntAct" id="Q8WWC4">
    <property type="interactions" value="96"/>
</dbReference>
<dbReference type="MINT" id="Q8WWC4"/>
<dbReference type="STRING" id="9606.ENSP00000295079"/>
<dbReference type="iPTMnet" id="Q8WWC4"/>
<dbReference type="PhosphoSitePlus" id="Q8WWC4"/>
<dbReference type="BioMuta" id="MAIP1"/>
<dbReference type="DMDM" id="74730963"/>
<dbReference type="jPOST" id="Q8WWC4"/>
<dbReference type="MassIVE" id="Q8WWC4"/>
<dbReference type="PaxDb" id="9606-ENSP00000295079"/>
<dbReference type="PeptideAtlas" id="Q8WWC4"/>
<dbReference type="ProteomicsDB" id="74877"/>
<dbReference type="Pumba" id="Q8WWC4"/>
<dbReference type="TopDownProteomics" id="Q8WWC4"/>
<dbReference type="Antibodypedia" id="34082">
    <property type="antibodies" value="110 antibodies from 19 providers"/>
</dbReference>
<dbReference type="DNASU" id="79568"/>
<dbReference type="Ensembl" id="ENST00000295079.6">
    <property type="protein sequence ID" value="ENSP00000295079.2"/>
    <property type="gene ID" value="ENSG00000162972.11"/>
</dbReference>
<dbReference type="Ensembl" id="ENST00000392290.6">
    <property type="protein sequence ID" value="ENSP00000376111.1"/>
    <property type="gene ID" value="ENSG00000162972.11"/>
</dbReference>
<dbReference type="GeneID" id="79568"/>
<dbReference type="KEGG" id="hsa:79568"/>
<dbReference type="MANE-Select" id="ENST00000392290.6">
    <property type="protein sequence ID" value="ENSP00000376111.1"/>
    <property type="RefSeq nucleotide sequence ID" value="NM_001394955.1"/>
    <property type="RefSeq protein sequence ID" value="NP_001381884.1"/>
</dbReference>
<dbReference type="UCSC" id="uc002uvm.4">
    <property type="organism name" value="human"/>
</dbReference>
<dbReference type="AGR" id="HGNC:26198"/>
<dbReference type="CTD" id="79568"/>
<dbReference type="DisGeNET" id="79568"/>
<dbReference type="GeneCards" id="MAIP1"/>
<dbReference type="HGNC" id="HGNC:26198">
    <property type="gene designation" value="MAIP1"/>
</dbReference>
<dbReference type="HPA" id="ENSG00000162972">
    <property type="expression patterns" value="Low tissue specificity"/>
</dbReference>
<dbReference type="MIM" id="617267">
    <property type="type" value="gene"/>
</dbReference>
<dbReference type="neXtProt" id="NX_Q8WWC4"/>
<dbReference type="OpenTargets" id="ENSG00000162972"/>
<dbReference type="PharmGKB" id="PA162379149"/>
<dbReference type="VEuPathDB" id="HostDB:ENSG00000162972"/>
<dbReference type="eggNOG" id="ENOG502QR8E">
    <property type="taxonomic scope" value="Eukaryota"/>
</dbReference>
<dbReference type="GeneTree" id="ENSGT00390000004145"/>
<dbReference type="HOGENOM" id="CLU_083348_0_0_1"/>
<dbReference type="InParanoid" id="Q8WWC4"/>
<dbReference type="OMA" id="SILMCFW"/>
<dbReference type="OrthoDB" id="7249367at2759"/>
<dbReference type="PAN-GO" id="Q8WWC4">
    <property type="GO annotations" value="4 GO annotations based on evolutionary models"/>
</dbReference>
<dbReference type="PhylomeDB" id="Q8WWC4"/>
<dbReference type="TreeFam" id="TF323801"/>
<dbReference type="PathwayCommons" id="Q8WWC4"/>
<dbReference type="Reactome" id="R-HSA-8949664">
    <property type="pathway name" value="Processing of SMDT1"/>
</dbReference>
<dbReference type="SignaLink" id="Q8WWC4"/>
<dbReference type="BioGRID-ORCS" id="79568">
    <property type="hits" value="16 hits in 1138 CRISPR screens"/>
</dbReference>
<dbReference type="GenomeRNAi" id="79568"/>
<dbReference type="Pharos" id="Q8WWC4">
    <property type="development level" value="Tbio"/>
</dbReference>
<dbReference type="PRO" id="PR:Q8WWC4"/>
<dbReference type="Proteomes" id="UP000005640">
    <property type="component" value="Chromosome 2"/>
</dbReference>
<dbReference type="RNAct" id="Q8WWC4">
    <property type="molecule type" value="protein"/>
</dbReference>
<dbReference type="Bgee" id="ENSG00000162972">
    <property type="expression patterns" value="Expressed in jejunal mucosa and 211 other cell types or tissues"/>
</dbReference>
<dbReference type="ExpressionAtlas" id="Q8WWC4">
    <property type="expression patterns" value="baseline and differential"/>
</dbReference>
<dbReference type="GO" id="GO:0005743">
    <property type="term" value="C:mitochondrial inner membrane"/>
    <property type="evidence" value="ECO:0000318"/>
    <property type="project" value="GO_Central"/>
</dbReference>
<dbReference type="GO" id="GO:0005759">
    <property type="term" value="C:mitochondrial matrix"/>
    <property type="evidence" value="ECO:0000314"/>
    <property type="project" value="UniProtKB"/>
</dbReference>
<dbReference type="GO" id="GO:0005739">
    <property type="term" value="C:mitochondrion"/>
    <property type="evidence" value="ECO:0000314"/>
    <property type="project" value="HPA"/>
</dbReference>
<dbReference type="GO" id="GO:0043022">
    <property type="term" value="F:ribosome binding"/>
    <property type="evidence" value="ECO:0000318"/>
    <property type="project" value="GO_Central"/>
</dbReference>
<dbReference type="GO" id="GO:0036444">
    <property type="term" value="P:calcium import into the mitochondrion"/>
    <property type="evidence" value="ECO:0000315"/>
    <property type="project" value="UniProtKB"/>
</dbReference>
<dbReference type="GO" id="GO:0051560">
    <property type="term" value="P:mitochondrial calcium ion homeostasis"/>
    <property type="evidence" value="ECO:0000315"/>
    <property type="project" value="UniProtKB"/>
</dbReference>
<dbReference type="GO" id="GO:0032979">
    <property type="term" value="P:protein insertion into mitochondrial inner membrane from matrix"/>
    <property type="evidence" value="ECO:0000318"/>
    <property type="project" value="GO_Central"/>
</dbReference>
<dbReference type="GO" id="GO:0051204">
    <property type="term" value="P:protein insertion into mitochondrial membrane"/>
    <property type="evidence" value="ECO:0000315"/>
    <property type="project" value="UniProtKB"/>
</dbReference>
<dbReference type="PANTHER" id="PTHR13333">
    <property type="entry name" value="M-AAA PROTEASE-INTERACTING PROTEIN 1, MITOCHONDRIAL"/>
    <property type="match status" value="1"/>
</dbReference>
<dbReference type="PANTHER" id="PTHR13333:SF5">
    <property type="entry name" value="M-AAA PROTEASE-INTERACTING PROTEIN 1, MITOCHONDRIAL"/>
    <property type="match status" value="1"/>
</dbReference>
<protein>
    <recommendedName>
        <fullName evidence="4">m-AAA protease-interacting protein 1, mitochondrial</fullName>
    </recommendedName>
    <alternativeName>
        <fullName evidence="6">Matrix AAA peptidase-interacting protein 1</fullName>
    </alternativeName>
</protein>
<reference key="1">
    <citation type="journal article" date="2004" name="Nat. Genet.">
        <title>Complete sequencing and characterization of 21,243 full-length human cDNAs.</title>
        <authorList>
            <person name="Ota T."/>
            <person name="Suzuki Y."/>
            <person name="Nishikawa T."/>
            <person name="Otsuki T."/>
            <person name="Sugiyama T."/>
            <person name="Irie R."/>
            <person name="Wakamatsu A."/>
            <person name="Hayashi K."/>
            <person name="Sato H."/>
            <person name="Nagai K."/>
            <person name="Kimura K."/>
            <person name="Makita H."/>
            <person name="Sekine M."/>
            <person name="Obayashi M."/>
            <person name="Nishi T."/>
            <person name="Shibahara T."/>
            <person name="Tanaka T."/>
            <person name="Ishii S."/>
            <person name="Yamamoto J."/>
            <person name="Saito K."/>
            <person name="Kawai Y."/>
            <person name="Isono Y."/>
            <person name="Nakamura Y."/>
            <person name="Nagahari K."/>
            <person name="Murakami K."/>
            <person name="Yasuda T."/>
            <person name="Iwayanagi T."/>
            <person name="Wagatsuma M."/>
            <person name="Shiratori A."/>
            <person name="Sudo H."/>
            <person name="Hosoiri T."/>
            <person name="Kaku Y."/>
            <person name="Kodaira H."/>
            <person name="Kondo H."/>
            <person name="Sugawara M."/>
            <person name="Takahashi M."/>
            <person name="Kanda K."/>
            <person name="Yokoi T."/>
            <person name="Furuya T."/>
            <person name="Kikkawa E."/>
            <person name="Omura Y."/>
            <person name="Abe K."/>
            <person name="Kamihara K."/>
            <person name="Katsuta N."/>
            <person name="Sato K."/>
            <person name="Tanikawa M."/>
            <person name="Yamazaki M."/>
            <person name="Ninomiya K."/>
            <person name="Ishibashi T."/>
            <person name="Yamashita H."/>
            <person name="Murakawa K."/>
            <person name="Fujimori K."/>
            <person name="Tanai H."/>
            <person name="Kimata M."/>
            <person name="Watanabe M."/>
            <person name="Hiraoka S."/>
            <person name="Chiba Y."/>
            <person name="Ishida S."/>
            <person name="Ono Y."/>
            <person name="Takiguchi S."/>
            <person name="Watanabe S."/>
            <person name="Yosida M."/>
            <person name="Hotuta T."/>
            <person name="Kusano J."/>
            <person name="Kanehori K."/>
            <person name="Takahashi-Fujii A."/>
            <person name="Hara H."/>
            <person name="Tanase T.-O."/>
            <person name="Nomura Y."/>
            <person name="Togiya S."/>
            <person name="Komai F."/>
            <person name="Hara R."/>
            <person name="Takeuchi K."/>
            <person name="Arita M."/>
            <person name="Imose N."/>
            <person name="Musashino K."/>
            <person name="Yuuki H."/>
            <person name="Oshima A."/>
            <person name="Sasaki N."/>
            <person name="Aotsuka S."/>
            <person name="Yoshikawa Y."/>
            <person name="Matsunawa H."/>
            <person name="Ichihara T."/>
            <person name="Shiohata N."/>
            <person name="Sano S."/>
            <person name="Moriya S."/>
            <person name="Momiyama H."/>
            <person name="Satoh N."/>
            <person name="Takami S."/>
            <person name="Terashima Y."/>
            <person name="Suzuki O."/>
            <person name="Nakagawa S."/>
            <person name="Senoh A."/>
            <person name="Mizoguchi H."/>
            <person name="Goto Y."/>
            <person name="Shimizu F."/>
            <person name="Wakebe H."/>
            <person name="Hishigaki H."/>
            <person name="Watanabe T."/>
            <person name="Sugiyama A."/>
            <person name="Takemoto M."/>
            <person name="Kawakami B."/>
            <person name="Yamazaki M."/>
            <person name="Watanabe K."/>
            <person name="Kumagai A."/>
            <person name="Itakura S."/>
            <person name="Fukuzumi Y."/>
            <person name="Fujimori Y."/>
            <person name="Komiyama M."/>
            <person name="Tashiro H."/>
            <person name="Tanigami A."/>
            <person name="Fujiwara T."/>
            <person name="Ono T."/>
            <person name="Yamada K."/>
            <person name="Fujii Y."/>
            <person name="Ozaki K."/>
            <person name="Hirao M."/>
            <person name="Ohmori Y."/>
            <person name="Kawabata A."/>
            <person name="Hikiji T."/>
            <person name="Kobatake N."/>
            <person name="Inagaki H."/>
            <person name="Ikema Y."/>
            <person name="Okamoto S."/>
            <person name="Okitani R."/>
            <person name="Kawakami T."/>
            <person name="Noguchi S."/>
            <person name="Itoh T."/>
            <person name="Shigeta K."/>
            <person name="Senba T."/>
            <person name="Matsumura K."/>
            <person name="Nakajima Y."/>
            <person name="Mizuno T."/>
            <person name="Morinaga M."/>
            <person name="Sasaki M."/>
            <person name="Togashi T."/>
            <person name="Oyama M."/>
            <person name="Hata H."/>
            <person name="Watanabe M."/>
            <person name="Komatsu T."/>
            <person name="Mizushima-Sugano J."/>
            <person name="Satoh T."/>
            <person name="Shirai Y."/>
            <person name="Takahashi Y."/>
            <person name="Nakagawa K."/>
            <person name="Okumura K."/>
            <person name="Nagase T."/>
            <person name="Nomura N."/>
            <person name="Kikuchi H."/>
            <person name="Masuho Y."/>
            <person name="Yamashita R."/>
            <person name="Nakai K."/>
            <person name="Yada T."/>
            <person name="Nakamura Y."/>
            <person name="Ohara O."/>
            <person name="Isogai T."/>
            <person name="Sugano S."/>
        </authorList>
    </citation>
    <scope>NUCLEOTIDE SEQUENCE [LARGE SCALE MRNA]</scope>
    <source>
        <tissue>Small intestine</tissue>
    </source>
</reference>
<reference key="2">
    <citation type="journal article" date="2005" name="Nature">
        <title>Generation and annotation of the DNA sequences of human chromosomes 2 and 4.</title>
        <authorList>
            <person name="Hillier L.W."/>
            <person name="Graves T.A."/>
            <person name="Fulton R.S."/>
            <person name="Fulton L.A."/>
            <person name="Pepin K.H."/>
            <person name="Minx P."/>
            <person name="Wagner-McPherson C."/>
            <person name="Layman D."/>
            <person name="Wylie K."/>
            <person name="Sekhon M."/>
            <person name="Becker M.C."/>
            <person name="Fewell G.A."/>
            <person name="Delehaunty K.D."/>
            <person name="Miner T.L."/>
            <person name="Nash W.E."/>
            <person name="Kremitzki C."/>
            <person name="Oddy L."/>
            <person name="Du H."/>
            <person name="Sun H."/>
            <person name="Bradshaw-Cordum H."/>
            <person name="Ali J."/>
            <person name="Carter J."/>
            <person name="Cordes M."/>
            <person name="Harris A."/>
            <person name="Isak A."/>
            <person name="van Brunt A."/>
            <person name="Nguyen C."/>
            <person name="Du F."/>
            <person name="Courtney L."/>
            <person name="Kalicki J."/>
            <person name="Ozersky P."/>
            <person name="Abbott S."/>
            <person name="Armstrong J."/>
            <person name="Belter E.A."/>
            <person name="Caruso L."/>
            <person name="Cedroni M."/>
            <person name="Cotton M."/>
            <person name="Davidson T."/>
            <person name="Desai A."/>
            <person name="Elliott G."/>
            <person name="Erb T."/>
            <person name="Fronick C."/>
            <person name="Gaige T."/>
            <person name="Haakenson W."/>
            <person name="Haglund K."/>
            <person name="Holmes A."/>
            <person name="Harkins R."/>
            <person name="Kim K."/>
            <person name="Kruchowski S.S."/>
            <person name="Strong C.M."/>
            <person name="Grewal N."/>
            <person name="Goyea E."/>
            <person name="Hou S."/>
            <person name="Levy A."/>
            <person name="Martinka S."/>
            <person name="Mead K."/>
            <person name="McLellan M.D."/>
            <person name="Meyer R."/>
            <person name="Randall-Maher J."/>
            <person name="Tomlinson C."/>
            <person name="Dauphin-Kohlberg S."/>
            <person name="Kozlowicz-Reilly A."/>
            <person name="Shah N."/>
            <person name="Swearengen-Shahid S."/>
            <person name="Snider J."/>
            <person name="Strong J.T."/>
            <person name="Thompson J."/>
            <person name="Yoakum M."/>
            <person name="Leonard S."/>
            <person name="Pearman C."/>
            <person name="Trani L."/>
            <person name="Radionenko M."/>
            <person name="Waligorski J.E."/>
            <person name="Wang C."/>
            <person name="Rock S.M."/>
            <person name="Tin-Wollam A.-M."/>
            <person name="Maupin R."/>
            <person name="Latreille P."/>
            <person name="Wendl M.C."/>
            <person name="Yang S.-P."/>
            <person name="Pohl C."/>
            <person name="Wallis J.W."/>
            <person name="Spieth J."/>
            <person name="Bieri T.A."/>
            <person name="Berkowicz N."/>
            <person name="Nelson J.O."/>
            <person name="Osborne J."/>
            <person name="Ding L."/>
            <person name="Meyer R."/>
            <person name="Sabo A."/>
            <person name="Shotland Y."/>
            <person name="Sinha P."/>
            <person name="Wohldmann P.E."/>
            <person name="Cook L.L."/>
            <person name="Hickenbotham M.T."/>
            <person name="Eldred J."/>
            <person name="Williams D."/>
            <person name="Jones T.A."/>
            <person name="She X."/>
            <person name="Ciccarelli F.D."/>
            <person name="Izaurralde E."/>
            <person name="Taylor J."/>
            <person name="Schmutz J."/>
            <person name="Myers R.M."/>
            <person name="Cox D.R."/>
            <person name="Huang X."/>
            <person name="McPherson J.D."/>
            <person name="Mardis E.R."/>
            <person name="Clifton S.W."/>
            <person name="Warren W.C."/>
            <person name="Chinwalla A.T."/>
            <person name="Eddy S.R."/>
            <person name="Marra M.A."/>
            <person name="Ovcharenko I."/>
            <person name="Furey T.S."/>
            <person name="Miller W."/>
            <person name="Eichler E.E."/>
            <person name="Bork P."/>
            <person name="Suyama M."/>
            <person name="Torrents D."/>
            <person name="Waterston R.H."/>
            <person name="Wilson R.K."/>
        </authorList>
    </citation>
    <scope>NUCLEOTIDE SEQUENCE [LARGE SCALE GENOMIC DNA]</scope>
</reference>
<reference key="3">
    <citation type="submission" date="2005-07" db="EMBL/GenBank/DDBJ databases">
        <authorList>
            <person name="Mural R.J."/>
            <person name="Istrail S."/>
            <person name="Sutton G.G."/>
            <person name="Florea L."/>
            <person name="Halpern A.L."/>
            <person name="Mobarry C.M."/>
            <person name="Lippert R."/>
            <person name="Walenz B."/>
            <person name="Shatkay H."/>
            <person name="Dew I."/>
            <person name="Miller J.R."/>
            <person name="Flanigan M.J."/>
            <person name="Edwards N.J."/>
            <person name="Bolanos R."/>
            <person name="Fasulo D."/>
            <person name="Halldorsson B.V."/>
            <person name="Hannenhalli S."/>
            <person name="Turner R."/>
            <person name="Yooseph S."/>
            <person name="Lu F."/>
            <person name="Nusskern D.R."/>
            <person name="Shue B.C."/>
            <person name="Zheng X.H."/>
            <person name="Zhong F."/>
            <person name="Delcher A.L."/>
            <person name="Huson D.H."/>
            <person name="Kravitz S.A."/>
            <person name="Mouchard L."/>
            <person name="Reinert K."/>
            <person name="Remington K.A."/>
            <person name="Clark A.G."/>
            <person name="Waterman M.S."/>
            <person name="Eichler E.E."/>
            <person name="Adams M.D."/>
            <person name="Hunkapiller M.W."/>
            <person name="Myers E.W."/>
            <person name="Venter J.C."/>
        </authorList>
    </citation>
    <scope>NUCLEOTIDE SEQUENCE [LARGE SCALE GENOMIC DNA]</scope>
</reference>
<reference key="4">
    <citation type="journal article" date="2004" name="Genome Res.">
        <title>The status, quality, and expansion of the NIH full-length cDNA project: the Mammalian Gene Collection (MGC).</title>
        <authorList>
            <consortium name="The MGC Project Team"/>
        </authorList>
    </citation>
    <scope>NUCLEOTIDE SEQUENCE [LARGE SCALE MRNA]</scope>
    <source>
        <tissue>Kidney</tissue>
    </source>
</reference>
<reference key="5">
    <citation type="journal article" date="2007" name="BMC Genomics">
        <title>The full-ORF clone resource of the German cDNA consortium.</title>
        <authorList>
            <person name="Bechtel S."/>
            <person name="Rosenfelder H."/>
            <person name="Duda A."/>
            <person name="Schmidt C.P."/>
            <person name="Ernst U."/>
            <person name="Wellenreuther R."/>
            <person name="Mehrle A."/>
            <person name="Schuster C."/>
            <person name="Bahr A."/>
            <person name="Bloecker H."/>
            <person name="Heubner D."/>
            <person name="Hoerlein A."/>
            <person name="Michel G."/>
            <person name="Wedler H."/>
            <person name="Koehrer K."/>
            <person name="Ottenwaelder B."/>
            <person name="Poustka A."/>
            <person name="Wiemann S."/>
            <person name="Schupp I."/>
        </authorList>
    </citation>
    <scope>NUCLEOTIDE SEQUENCE [LARGE SCALE MRNA] OF 121-291</scope>
    <source>
        <tissue>Stomach</tissue>
    </source>
</reference>
<reference key="6">
    <citation type="journal article" date="2011" name="BMC Syst. Biol.">
        <title>Initial characterization of the human central proteome.</title>
        <authorList>
            <person name="Burkard T.R."/>
            <person name="Planyavsky M."/>
            <person name="Kaupe I."/>
            <person name="Breitwieser F.P."/>
            <person name="Buerckstuemmer T."/>
            <person name="Bennett K.L."/>
            <person name="Superti-Furga G."/>
            <person name="Colinge J."/>
        </authorList>
    </citation>
    <scope>IDENTIFICATION BY MASS SPECTROMETRY [LARGE SCALE ANALYSIS]</scope>
</reference>
<reference key="7">
    <citation type="journal article" date="2015" name="Proteomics">
        <title>N-terminome analysis of the human mitochondrial proteome.</title>
        <authorList>
            <person name="Vaca Jacome A.S."/>
            <person name="Rabilloud T."/>
            <person name="Schaeffer-Reiss C."/>
            <person name="Rompais M."/>
            <person name="Ayoub D."/>
            <person name="Lane L."/>
            <person name="Bairoch A."/>
            <person name="Van Dorsselaer A."/>
            <person name="Carapito C."/>
        </authorList>
    </citation>
    <scope>IDENTIFICATION BY MASS SPECTROMETRY [LARGE SCALE ANALYSIS]</scope>
</reference>
<reference key="8">
    <citation type="journal article" date="2016" name="Mol. Cell">
        <title>Mitochondrial protein interaction mapping identifies regulators of respiratory chain function.</title>
        <authorList>
            <person name="Floyd B.J."/>
            <person name="Wilkerson E.M."/>
            <person name="Veling M.T."/>
            <person name="Minogue C.E."/>
            <person name="Xia C."/>
            <person name="Beebe E.T."/>
            <person name="Wrobel R.L."/>
            <person name="Cho H."/>
            <person name="Kremer L.S."/>
            <person name="Alston C.L."/>
            <person name="Gromek K.A."/>
            <person name="Dolan B.K."/>
            <person name="Ulbrich A."/>
            <person name="Stefely J.A."/>
            <person name="Bohl S.L."/>
            <person name="Werner K.M."/>
            <person name="Jochem A."/>
            <person name="Westphall M.S."/>
            <person name="Rensvold J.W."/>
            <person name="Taylor R.W."/>
            <person name="Prokisch H."/>
            <person name="Kim J.J."/>
            <person name="Coon J.J."/>
            <person name="Pagliarini D.J."/>
        </authorList>
    </citation>
    <scope>INTERACTION WITH AFG3L2 AND SPG7</scope>
</reference>
<reference key="9">
    <citation type="journal article" date="2016" name="Mol. Cell">
        <title>The m-AAA protease associated with neurodegeneration limits MCU activity in mitochondria.</title>
        <authorList>
            <person name="Koenig T."/>
            <person name="Troeder S.E."/>
            <person name="Bakka K."/>
            <person name="Korwitz A."/>
            <person name="Richter-Dennerlein R."/>
            <person name="Lampe P.A."/>
            <person name="Patron M."/>
            <person name="Muehlmeister M."/>
            <person name="Guerrero-Castillo S."/>
            <person name="Brandt U."/>
            <person name="Decker T."/>
            <person name="Lauria I."/>
            <person name="Paggio A."/>
            <person name="Rizzuto R."/>
            <person name="Rugarli E.I."/>
            <person name="De Stefani D."/>
            <person name="Langer T."/>
        </authorList>
    </citation>
    <scope>FUNCTION</scope>
    <scope>SUBCELLULAR LOCATION</scope>
    <scope>INTERACTION WITH AFG3L2 AND SMDT1</scope>
</reference>
<organism>
    <name type="scientific">Homo sapiens</name>
    <name type="common">Human</name>
    <dbReference type="NCBI Taxonomy" id="9606"/>
    <lineage>
        <taxon>Eukaryota</taxon>
        <taxon>Metazoa</taxon>
        <taxon>Chordata</taxon>
        <taxon>Craniata</taxon>
        <taxon>Vertebrata</taxon>
        <taxon>Euteleostomi</taxon>
        <taxon>Mammalia</taxon>
        <taxon>Eutheria</taxon>
        <taxon>Euarchontoglires</taxon>
        <taxon>Primates</taxon>
        <taxon>Haplorrhini</taxon>
        <taxon>Catarrhini</taxon>
        <taxon>Hominidae</taxon>
        <taxon>Homo</taxon>
    </lineage>
</organism>
<proteinExistence type="evidence at protein level"/>
<name>MAIP1_HUMAN</name>
<evidence type="ECO:0000255" key="1"/>
<evidence type="ECO:0000269" key="2">
    <source>
    </source>
</evidence>
<evidence type="ECO:0000269" key="3">
    <source>
    </source>
</evidence>
<evidence type="ECO:0000303" key="4">
    <source>
    </source>
</evidence>
<evidence type="ECO:0000305" key="5"/>
<evidence type="ECO:0000312" key="6">
    <source>
        <dbReference type="HGNC" id="HGNC:26198"/>
    </source>
</evidence>
<accession>Q8WWC4</accession>
<accession>Q658V9</accession>
<accession>Q9H671</accession>
<sequence>MALAARLLPQFLHSRSLPCGAVRLRTPAVAEVRLPSATLCYFCRCRLGLGAALFPRSARALAASALPAQGSRWPVLSSPGLPAAFASFPACPQRSYSTEEKPQQHQKTKMIVLGFSNPINWVRTRIKAFLIWAYFDKEFSITEFSEGAKQAFAHVSKLLSQCKFDLLEELVAKEVLHALKEKVTSLPDNHKNALAANIDEIVFTSTGDISIYYDEKGRKFVNILMCFWYLTSANIPSETLRGASVFQVKLGNQNVETKQLLSASYEFQREFTQGVKPDWTIARIEHSKLLE</sequence>
<keyword id="KW-0496">Mitochondrion</keyword>
<keyword id="KW-1267">Proteomics identification</keyword>
<keyword id="KW-1185">Reference proteome</keyword>
<keyword id="KW-0809">Transit peptide</keyword>